<name>ILVC_UNCAG</name>
<proteinExistence type="evidence at protein level"/>
<protein>
    <recommendedName>
        <fullName evidence="6">Ketol-acid reductoisomerase (NAD(+))</fullName>
        <shortName evidence="2 6">KARI</shortName>
        <ecNumber evidence="1">1.1.1.382</ecNumber>
    </recommendedName>
    <alternativeName>
        <fullName evidence="2">Acetohydroxy-acid isomeroreductase</fullName>
        <shortName evidence="2">AHIR</shortName>
    </alternativeName>
    <alternativeName>
        <fullName evidence="2">Alpha-keto-beta-hydroxylacyl reductoisomerase</fullName>
    </alternativeName>
    <alternativeName>
        <fullName evidence="2 6">Ketol-acid reductoisomerase type 1</fullName>
    </alternativeName>
    <alternativeName>
        <fullName evidence="2 6">Ketol-acid reductoisomerase type I</fullName>
    </alternativeName>
</protein>
<reference key="1">
    <citation type="journal article" date="2004" name="Science">
        <title>Reverse methanogenesis: testing the hypothesis with environmental genomics.</title>
        <authorList>
            <person name="Hallam S.J."/>
            <person name="Putnam N."/>
            <person name="Preston C.M."/>
            <person name="Detter J.C."/>
            <person name="Rokhsar D."/>
            <person name="Richardson P.M."/>
            <person name="DeLong E.F."/>
        </authorList>
    </citation>
    <scope>NUCLEOTIDE SEQUENCE [GENOMIC DNA]</scope>
</reference>
<reference key="2">
    <citation type="journal article" date="2015" name="Biochem. J.">
        <title>Cofactor specificity motifs and the induced fit mechanism in class I ketol-acid reductoisomerases.</title>
        <authorList>
            <person name="Cahn J.K."/>
            <person name="Brinkmann-Chen S."/>
            <person name="Spatzal T."/>
            <person name="Wiig J.A."/>
            <person name="Buller A.R."/>
            <person name="Einsle O."/>
            <person name="Hu Y."/>
            <person name="Ribbe M.W."/>
            <person name="Arnold F.H."/>
        </authorList>
    </citation>
    <scope>X-RAY CRYSTALLOGRAPHY (1.53 ANGSTROMS) IN COMPLEX WITH NAD AND MAGNESIUM IONS</scope>
    <scope>FUNCTION</scope>
    <scope>COFACTOR</scope>
    <scope>SUBUNIT</scope>
</reference>
<dbReference type="EC" id="1.1.1.382" evidence="1"/>
<dbReference type="EMBL" id="AY714843">
    <property type="protein sequence ID" value="AAU83160.1"/>
    <property type="molecule type" value="Genomic_DNA"/>
</dbReference>
<dbReference type="PDB" id="4XDY">
    <property type="method" value="X-ray"/>
    <property type="resolution" value="1.53 A"/>
    <property type="chains" value="A/B=1-332"/>
</dbReference>
<dbReference type="PDBsum" id="4XDY"/>
<dbReference type="SMR" id="Q64BR7"/>
<dbReference type="BRENDA" id="1.1.1.382">
    <property type="organism ID" value="12627"/>
</dbReference>
<dbReference type="BRENDA" id="1.1.1.86">
    <property type="organism ID" value="12627"/>
</dbReference>
<dbReference type="UniPathway" id="UPA00047">
    <property type="reaction ID" value="UER00056"/>
</dbReference>
<dbReference type="UniPathway" id="UPA00049">
    <property type="reaction ID" value="UER00060"/>
</dbReference>
<dbReference type="EvolutionaryTrace" id="Q64BR7"/>
<dbReference type="GO" id="GO:0004455">
    <property type="term" value="F:ketol-acid reductoisomerase activity"/>
    <property type="evidence" value="ECO:0007669"/>
    <property type="project" value="UniProtKB-UniRule"/>
</dbReference>
<dbReference type="GO" id="GO:0000287">
    <property type="term" value="F:magnesium ion binding"/>
    <property type="evidence" value="ECO:0007669"/>
    <property type="project" value="UniProtKB-UniRule"/>
</dbReference>
<dbReference type="GO" id="GO:0050661">
    <property type="term" value="F:NADP binding"/>
    <property type="evidence" value="ECO:0007669"/>
    <property type="project" value="InterPro"/>
</dbReference>
<dbReference type="GO" id="GO:0009097">
    <property type="term" value="P:isoleucine biosynthetic process"/>
    <property type="evidence" value="ECO:0007669"/>
    <property type="project" value="UniProtKB-UniRule"/>
</dbReference>
<dbReference type="GO" id="GO:0009099">
    <property type="term" value="P:L-valine biosynthetic process"/>
    <property type="evidence" value="ECO:0007669"/>
    <property type="project" value="UniProtKB-UniRule"/>
</dbReference>
<dbReference type="Gene3D" id="6.10.240.10">
    <property type="match status" value="1"/>
</dbReference>
<dbReference type="Gene3D" id="3.40.50.720">
    <property type="entry name" value="NAD(P)-binding Rossmann-like Domain"/>
    <property type="match status" value="1"/>
</dbReference>
<dbReference type="HAMAP" id="MF_00435">
    <property type="entry name" value="IlvC"/>
    <property type="match status" value="1"/>
</dbReference>
<dbReference type="InterPro" id="IPR008927">
    <property type="entry name" value="6-PGluconate_DH-like_C_sf"/>
</dbReference>
<dbReference type="InterPro" id="IPR013023">
    <property type="entry name" value="KARI"/>
</dbReference>
<dbReference type="InterPro" id="IPR000506">
    <property type="entry name" value="KARI_C"/>
</dbReference>
<dbReference type="InterPro" id="IPR013116">
    <property type="entry name" value="KARI_N"/>
</dbReference>
<dbReference type="InterPro" id="IPR014359">
    <property type="entry name" value="KARI_prok"/>
</dbReference>
<dbReference type="InterPro" id="IPR036291">
    <property type="entry name" value="NAD(P)-bd_dom_sf"/>
</dbReference>
<dbReference type="NCBIfam" id="TIGR00465">
    <property type="entry name" value="ilvC"/>
    <property type="match status" value="1"/>
</dbReference>
<dbReference type="NCBIfam" id="NF004017">
    <property type="entry name" value="PRK05479.1"/>
    <property type="match status" value="1"/>
</dbReference>
<dbReference type="PANTHER" id="PTHR21371">
    <property type="entry name" value="KETOL-ACID REDUCTOISOMERASE, MITOCHONDRIAL"/>
    <property type="match status" value="1"/>
</dbReference>
<dbReference type="PANTHER" id="PTHR21371:SF1">
    <property type="entry name" value="KETOL-ACID REDUCTOISOMERASE, MITOCHONDRIAL"/>
    <property type="match status" value="1"/>
</dbReference>
<dbReference type="Pfam" id="PF01450">
    <property type="entry name" value="KARI_C"/>
    <property type="match status" value="1"/>
</dbReference>
<dbReference type="Pfam" id="PF07991">
    <property type="entry name" value="KARI_N"/>
    <property type="match status" value="1"/>
</dbReference>
<dbReference type="PIRSF" id="PIRSF000116">
    <property type="entry name" value="IlvC_gammaproteo"/>
    <property type="match status" value="1"/>
</dbReference>
<dbReference type="SUPFAM" id="SSF48179">
    <property type="entry name" value="6-phosphogluconate dehydrogenase C-terminal domain-like"/>
    <property type="match status" value="1"/>
</dbReference>
<dbReference type="SUPFAM" id="SSF51735">
    <property type="entry name" value="NAD(P)-binding Rossmann-fold domains"/>
    <property type="match status" value="1"/>
</dbReference>
<dbReference type="PROSITE" id="PS51851">
    <property type="entry name" value="KARI_C"/>
    <property type="match status" value="1"/>
</dbReference>
<dbReference type="PROSITE" id="PS51850">
    <property type="entry name" value="KARI_N"/>
    <property type="match status" value="1"/>
</dbReference>
<accession>Q64BR7</accession>
<organism>
    <name type="scientific">Uncultured archaeon GZfos26G2</name>
    <dbReference type="NCBI Taxonomy" id="3386331"/>
    <lineage>
        <taxon>Archaea</taxon>
        <taxon>Methanobacteriati</taxon>
        <taxon>Methanobacteriota</taxon>
        <taxon>Stenosarchaea group</taxon>
        <taxon>Methanomicrobia</taxon>
        <taxon>Candidatus Methanophagales</taxon>
        <taxon>Candidatus Methanophagaceae</taxon>
        <taxon>Candidatus Methanophaga</taxon>
    </lineage>
</organism>
<feature type="chain" id="PRO_0000436836" description="Ketol-acid reductoisomerase (NAD(+))">
    <location>
        <begin position="1"/>
        <end position="332"/>
    </location>
</feature>
<feature type="domain" description="KARI N-terminal Rossmann" evidence="3">
    <location>
        <begin position="1"/>
        <end position="186"/>
    </location>
</feature>
<feature type="domain" description="KARI C-terminal knotted" evidence="4">
    <location>
        <begin position="187"/>
        <end position="332"/>
    </location>
</feature>
<feature type="active site" evidence="2">
    <location>
        <position position="112"/>
    </location>
</feature>
<feature type="binding site" evidence="2 5">
    <location>
        <begin position="24"/>
        <end position="27"/>
    </location>
    <ligand>
        <name>NAD(+)</name>
        <dbReference type="ChEBI" id="CHEBI:57540"/>
    </ligand>
</feature>
<feature type="binding site" evidence="2 5">
    <location>
        <position position="46"/>
    </location>
    <ligand>
        <name>NAD(+)</name>
        <dbReference type="ChEBI" id="CHEBI:57540"/>
    </ligand>
</feature>
<feature type="binding site" evidence="2 5">
    <location>
        <position position="55"/>
    </location>
    <ligand>
        <name>NAD(+)</name>
        <dbReference type="ChEBI" id="CHEBI:57540"/>
    </ligand>
</feature>
<feature type="binding site" evidence="2 5">
    <location>
        <position position="57"/>
    </location>
    <ligand>
        <name>NAD(+)</name>
        <dbReference type="ChEBI" id="CHEBI:57540"/>
    </ligand>
</feature>
<feature type="binding site" evidence="2 5">
    <location>
        <begin position="87"/>
        <end position="90"/>
    </location>
    <ligand>
        <name>NAD(+)</name>
        <dbReference type="ChEBI" id="CHEBI:57540"/>
    </ligand>
</feature>
<feature type="binding site" evidence="2 5">
    <location>
        <position position="138"/>
    </location>
    <ligand>
        <name>NAD(+)</name>
        <dbReference type="ChEBI" id="CHEBI:57540"/>
    </ligand>
</feature>
<feature type="binding site" evidence="2 5">
    <location>
        <position position="195"/>
    </location>
    <ligand>
        <name>Mg(2+)</name>
        <dbReference type="ChEBI" id="CHEBI:18420"/>
        <label>1</label>
    </ligand>
</feature>
<feature type="binding site" evidence="2">
    <location>
        <position position="195"/>
    </location>
    <ligand>
        <name>Mg(2+)</name>
        <dbReference type="ChEBI" id="CHEBI:18420"/>
        <label>2</label>
    </ligand>
</feature>
<feature type="binding site" evidence="2 5">
    <location>
        <position position="199"/>
    </location>
    <ligand>
        <name>Mg(2+)</name>
        <dbReference type="ChEBI" id="CHEBI:18420"/>
        <label>1</label>
    </ligand>
</feature>
<feature type="binding site" evidence="2">
    <location>
        <position position="231"/>
    </location>
    <ligand>
        <name>Mg(2+)</name>
        <dbReference type="ChEBI" id="CHEBI:18420"/>
        <label>2</label>
    </ligand>
</feature>
<feature type="binding site" evidence="2">
    <location>
        <position position="235"/>
    </location>
    <ligand>
        <name>Mg(2+)</name>
        <dbReference type="ChEBI" id="CHEBI:18420"/>
        <label>2</label>
    </ligand>
</feature>
<feature type="binding site" evidence="2">
    <location>
        <position position="256"/>
    </location>
    <ligand>
        <name>substrate</name>
    </ligand>
</feature>
<feature type="helix" evidence="8">
    <location>
        <begin position="6"/>
        <end position="8"/>
    </location>
</feature>
<feature type="helix" evidence="8">
    <location>
        <begin position="12"/>
        <end position="16"/>
    </location>
</feature>
<feature type="strand" evidence="8">
    <location>
        <begin position="18"/>
        <end position="22"/>
    </location>
</feature>
<feature type="helix" evidence="8">
    <location>
        <begin position="26"/>
        <end position="37"/>
    </location>
</feature>
<feature type="strand" evidence="8">
    <location>
        <begin position="41"/>
        <end position="46"/>
    </location>
</feature>
<feature type="strand" evidence="8">
    <location>
        <begin position="48"/>
        <end position="50"/>
    </location>
</feature>
<feature type="helix" evidence="8">
    <location>
        <begin position="56"/>
        <end position="63"/>
    </location>
</feature>
<feature type="strand" evidence="8">
    <location>
        <begin position="67"/>
        <end position="70"/>
    </location>
</feature>
<feature type="helix" evidence="8">
    <location>
        <begin position="71"/>
        <end position="77"/>
    </location>
</feature>
<feature type="strand" evidence="8">
    <location>
        <begin position="79"/>
        <end position="83"/>
    </location>
</feature>
<feature type="turn" evidence="8">
    <location>
        <begin position="87"/>
        <end position="89"/>
    </location>
</feature>
<feature type="helix" evidence="8">
    <location>
        <begin position="90"/>
        <end position="97"/>
    </location>
</feature>
<feature type="helix" evidence="8">
    <location>
        <begin position="99"/>
        <end position="101"/>
    </location>
</feature>
<feature type="strand" evidence="8">
    <location>
        <begin position="107"/>
        <end position="113"/>
    </location>
</feature>
<feature type="helix" evidence="8">
    <location>
        <begin position="114"/>
        <end position="117"/>
    </location>
</feature>
<feature type="strand" evidence="8">
    <location>
        <begin position="127"/>
        <end position="136"/>
    </location>
</feature>
<feature type="helix" evidence="8">
    <location>
        <begin position="138"/>
        <end position="146"/>
    </location>
</feature>
<feature type="strand" evidence="8">
    <location>
        <begin position="153"/>
        <end position="159"/>
    </location>
</feature>
<feature type="helix" evidence="8">
    <location>
        <begin position="165"/>
        <end position="175"/>
    </location>
</feature>
<feature type="helix" evidence="8">
    <location>
        <begin position="178"/>
        <end position="180"/>
    </location>
</feature>
<feature type="strand" evidence="8">
    <location>
        <begin position="183"/>
        <end position="185"/>
    </location>
</feature>
<feature type="helix" evidence="8">
    <location>
        <begin position="188"/>
        <end position="201"/>
    </location>
</feature>
<feature type="turn" evidence="8">
    <location>
        <begin position="202"/>
        <end position="204"/>
    </location>
</feature>
<feature type="helix" evidence="8">
    <location>
        <begin position="205"/>
        <end position="220"/>
    </location>
</feature>
<feature type="helix" evidence="8">
    <location>
        <begin position="225"/>
        <end position="232"/>
    </location>
</feature>
<feature type="helix" evidence="8">
    <location>
        <begin position="234"/>
        <end position="254"/>
    </location>
</feature>
<feature type="helix" evidence="8">
    <location>
        <begin position="257"/>
        <end position="270"/>
    </location>
</feature>
<feature type="helix" evidence="8">
    <location>
        <begin position="273"/>
        <end position="287"/>
    </location>
</feature>
<feature type="helix" evidence="8">
    <location>
        <begin position="290"/>
        <end position="300"/>
    </location>
</feature>
<feature type="helix" evidence="8">
    <location>
        <begin position="304"/>
        <end position="315"/>
    </location>
</feature>
<feature type="helix" evidence="8">
    <location>
        <begin position="317"/>
        <end position="327"/>
    </location>
</feature>
<gene>
    <name evidence="2" type="primary">ilvC</name>
    <name evidence="7" type="ORF">GZ26G2_30</name>
</gene>
<keyword id="KW-0002">3D-structure</keyword>
<keyword id="KW-0028">Amino-acid biosynthesis</keyword>
<keyword id="KW-0100">Branched-chain amino acid biosynthesis</keyword>
<keyword id="KW-0460">Magnesium</keyword>
<keyword id="KW-0479">Metal-binding</keyword>
<keyword id="KW-0520">NAD</keyword>
<keyword id="KW-0560">Oxidoreductase</keyword>
<comment type="function">
    <text evidence="5">Involved in the biosynthesis of branched-chain amino acids (BCAA). Catalyzes an alkyl-migration followed by a ketol-acid reduction of (S)-2-acetolactate (S2AL) to yield (R)-2,3-dihydroxy-isovalerate. In the isomerase reaction, S2AL is rearranged via a Mg-dependent methyl migration to produce 3-hydroxy-3-methyl-2-ketobutyrate (HMKB). In the reductase reaction, this 2-ketoacid undergoes a metal-dependent reduction by NADH to yield (R)-2,3-dihydroxy-isovalerate.</text>
</comment>
<comment type="catalytic activity">
    <reaction evidence="1">
        <text>(2R)-2,3-dihydroxy-3-methylbutanoate + NAD(+) = (2S)-2-acetolactate + NADH + H(+)</text>
        <dbReference type="Rhea" id="RHEA:30627"/>
        <dbReference type="ChEBI" id="CHEBI:15378"/>
        <dbReference type="ChEBI" id="CHEBI:49072"/>
        <dbReference type="ChEBI" id="CHEBI:57540"/>
        <dbReference type="ChEBI" id="CHEBI:57945"/>
        <dbReference type="ChEBI" id="CHEBI:58476"/>
        <dbReference type="EC" id="1.1.1.382"/>
    </reaction>
</comment>
<comment type="cofactor">
    <cofactor evidence="2 5">
        <name>Mg(2+)</name>
        <dbReference type="ChEBI" id="CHEBI:18420"/>
    </cofactor>
    <text evidence="2">Binds 2 magnesium ions per subunit.</text>
</comment>
<comment type="pathway">
    <text evidence="2">Amino-acid biosynthesis; L-isoleucine biosynthesis; L-isoleucine from 2-oxobutanoate: step 2/4.</text>
</comment>
<comment type="pathway">
    <text evidence="2">Amino-acid biosynthesis; L-valine biosynthesis; L-valine from pyruvate: step 2/4.</text>
</comment>
<comment type="subunit">
    <text evidence="5">Homodimer.</text>
</comment>
<comment type="similarity">
    <text evidence="2">Belongs to the ketol-acid reductoisomerase family.</text>
</comment>
<evidence type="ECO:0000250" key="1">
    <source>
        <dbReference type="UniProtKB" id="K4LVZ1"/>
    </source>
</evidence>
<evidence type="ECO:0000255" key="2">
    <source>
        <dbReference type="HAMAP-Rule" id="MF_00435"/>
    </source>
</evidence>
<evidence type="ECO:0000255" key="3">
    <source>
        <dbReference type="PROSITE-ProRule" id="PRU01197"/>
    </source>
</evidence>
<evidence type="ECO:0000255" key="4">
    <source>
        <dbReference type="PROSITE-ProRule" id="PRU01198"/>
    </source>
</evidence>
<evidence type="ECO:0000269" key="5">
    <source>
    </source>
</evidence>
<evidence type="ECO:0000303" key="6">
    <source>
    </source>
</evidence>
<evidence type="ECO:0000312" key="7">
    <source>
        <dbReference type="EMBL" id="AAU83160.1"/>
    </source>
</evidence>
<evidence type="ECO:0007829" key="8">
    <source>
        <dbReference type="PDB" id="4XDY"/>
    </source>
</evidence>
<sequence>MEILHDEDVDDSILRDKTIAVMGYGAQGDAQANCLKDSGINVVIGETEILGGNKNPSWEKAKEDGFEVLPIDKAAEKGDVVHILLPDEVQPAIYENQIKPQLKAGKALCFSHGFNICFKRIVPPEDVDVIMVAPKAPGTEERKAYLEGFGVPGLVAVKQNPSGEAREVALAMTKAMHWTKAGILECTFEQETYEDLFGEQCVLCGGLVELMRNGFEVLVEAGYPPEMAYFECVHEMKLIVDLVWQGGIKRMAEVISNTAEYGMWAVGHQIIGPEVKEKMKEALKRVENGEFANEWVDEYKRGIPFLKASREKMGEHQVETVGAEIRKLFAQK</sequence>